<protein>
    <recommendedName>
        <fullName evidence="1">NADH-quinone oxidoreductase subunit B</fullName>
        <ecNumber evidence="1">7.1.1.-</ecNumber>
    </recommendedName>
    <alternativeName>
        <fullName evidence="1">NADH dehydrogenase I subunit B</fullName>
    </alternativeName>
    <alternativeName>
        <fullName evidence="1">NDH-1 subunit B</fullName>
    </alternativeName>
</protein>
<organism>
    <name type="scientific">Campylobacter jejuni subsp. doylei (strain ATCC BAA-1458 / RM4099 / 269.97)</name>
    <dbReference type="NCBI Taxonomy" id="360109"/>
    <lineage>
        <taxon>Bacteria</taxon>
        <taxon>Pseudomonadati</taxon>
        <taxon>Campylobacterota</taxon>
        <taxon>Epsilonproteobacteria</taxon>
        <taxon>Campylobacterales</taxon>
        <taxon>Campylobacteraceae</taxon>
        <taxon>Campylobacter</taxon>
    </lineage>
</organism>
<dbReference type="EC" id="7.1.1.-" evidence="1"/>
<dbReference type="EMBL" id="CP000768">
    <property type="protein sequence ID" value="ABS44465.1"/>
    <property type="molecule type" value="Genomic_DNA"/>
</dbReference>
<dbReference type="SMR" id="A7H5T0"/>
<dbReference type="KEGG" id="cjd:JJD26997_1929"/>
<dbReference type="HOGENOM" id="CLU_055737_7_3_7"/>
<dbReference type="Proteomes" id="UP000002302">
    <property type="component" value="Chromosome"/>
</dbReference>
<dbReference type="GO" id="GO:0005886">
    <property type="term" value="C:plasma membrane"/>
    <property type="evidence" value="ECO:0007669"/>
    <property type="project" value="UniProtKB-SubCell"/>
</dbReference>
<dbReference type="GO" id="GO:0045271">
    <property type="term" value="C:respiratory chain complex I"/>
    <property type="evidence" value="ECO:0007669"/>
    <property type="project" value="TreeGrafter"/>
</dbReference>
<dbReference type="GO" id="GO:0051539">
    <property type="term" value="F:4 iron, 4 sulfur cluster binding"/>
    <property type="evidence" value="ECO:0007669"/>
    <property type="project" value="UniProtKB-KW"/>
</dbReference>
<dbReference type="GO" id="GO:0005506">
    <property type="term" value="F:iron ion binding"/>
    <property type="evidence" value="ECO:0007669"/>
    <property type="project" value="UniProtKB-UniRule"/>
</dbReference>
<dbReference type="GO" id="GO:0008137">
    <property type="term" value="F:NADH dehydrogenase (ubiquinone) activity"/>
    <property type="evidence" value="ECO:0007669"/>
    <property type="project" value="InterPro"/>
</dbReference>
<dbReference type="GO" id="GO:0050136">
    <property type="term" value="F:NADH:ubiquinone reductase (non-electrogenic) activity"/>
    <property type="evidence" value="ECO:0007669"/>
    <property type="project" value="UniProtKB-UniRule"/>
</dbReference>
<dbReference type="GO" id="GO:0048038">
    <property type="term" value="F:quinone binding"/>
    <property type="evidence" value="ECO:0007669"/>
    <property type="project" value="UniProtKB-KW"/>
</dbReference>
<dbReference type="GO" id="GO:0009060">
    <property type="term" value="P:aerobic respiration"/>
    <property type="evidence" value="ECO:0007669"/>
    <property type="project" value="TreeGrafter"/>
</dbReference>
<dbReference type="GO" id="GO:0015990">
    <property type="term" value="P:electron transport coupled proton transport"/>
    <property type="evidence" value="ECO:0007669"/>
    <property type="project" value="TreeGrafter"/>
</dbReference>
<dbReference type="FunFam" id="3.40.50.12280:FF:000002">
    <property type="entry name" value="NADH-quinone oxidoreductase subunit B"/>
    <property type="match status" value="1"/>
</dbReference>
<dbReference type="Gene3D" id="3.40.50.12280">
    <property type="match status" value="1"/>
</dbReference>
<dbReference type="HAMAP" id="MF_01356">
    <property type="entry name" value="NDH1_NuoB"/>
    <property type="match status" value="1"/>
</dbReference>
<dbReference type="InterPro" id="IPR006137">
    <property type="entry name" value="NADH_UbQ_OxRdtase-like_20kDa"/>
</dbReference>
<dbReference type="InterPro" id="IPR006138">
    <property type="entry name" value="NADH_UQ_OxRdtase_20Kd_su"/>
</dbReference>
<dbReference type="NCBIfam" id="TIGR01957">
    <property type="entry name" value="nuoB_fam"/>
    <property type="match status" value="1"/>
</dbReference>
<dbReference type="NCBIfam" id="NF005012">
    <property type="entry name" value="PRK06411.1"/>
    <property type="match status" value="1"/>
</dbReference>
<dbReference type="PANTHER" id="PTHR11995">
    <property type="entry name" value="NADH DEHYDROGENASE"/>
    <property type="match status" value="1"/>
</dbReference>
<dbReference type="PANTHER" id="PTHR11995:SF14">
    <property type="entry name" value="NADH DEHYDROGENASE [UBIQUINONE] IRON-SULFUR PROTEIN 7, MITOCHONDRIAL"/>
    <property type="match status" value="1"/>
</dbReference>
<dbReference type="Pfam" id="PF01058">
    <property type="entry name" value="Oxidored_q6"/>
    <property type="match status" value="1"/>
</dbReference>
<dbReference type="SUPFAM" id="SSF56770">
    <property type="entry name" value="HydA/Nqo6-like"/>
    <property type="match status" value="1"/>
</dbReference>
<name>NUOB_CAMJD</name>
<comment type="function">
    <text evidence="1">NDH-1 shuttles electrons from NADH, via FMN and iron-sulfur (Fe-S) centers, to quinones in the respiratory chain. The immediate electron acceptor for the enzyme in this species is believed to be ubiquinone. Couples the redox reaction to proton translocation (for every two electrons transferred, four hydrogen ions are translocated across the cytoplasmic membrane), and thus conserves the redox energy in a proton gradient.</text>
</comment>
<comment type="catalytic activity">
    <reaction evidence="1">
        <text>a quinone + NADH + 5 H(+)(in) = a quinol + NAD(+) + 4 H(+)(out)</text>
        <dbReference type="Rhea" id="RHEA:57888"/>
        <dbReference type="ChEBI" id="CHEBI:15378"/>
        <dbReference type="ChEBI" id="CHEBI:24646"/>
        <dbReference type="ChEBI" id="CHEBI:57540"/>
        <dbReference type="ChEBI" id="CHEBI:57945"/>
        <dbReference type="ChEBI" id="CHEBI:132124"/>
    </reaction>
</comment>
<comment type="cofactor">
    <cofactor evidence="1">
        <name>[4Fe-4S] cluster</name>
        <dbReference type="ChEBI" id="CHEBI:49883"/>
    </cofactor>
    <text evidence="1">Binds 1 [4Fe-4S] cluster.</text>
</comment>
<comment type="subunit">
    <text evidence="1">NDH-1 is composed of 14 different subunits. Subunits NuoB, C, D, E, F, and G constitute the peripheral sector of the complex.</text>
</comment>
<comment type="subcellular location">
    <subcellularLocation>
        <location evidence="1">Cell inner membrane</location>
        <topology evidence="1">Peripheral membrane protein</topology>
        <orientation evidence="1">Cytoplasmic side</orientation>
    </subcellularLocation>
</comment>
<comment type="similarity">
    <text evidence="1">Belongs to the complex I 20 kDa subunit family.</text>
</comment>
<reference key="1">
    <citation type="submission" date="2007-07" db="EMBL/GenBank/DDBJ databases">
        <title>Complete genome sequence of Campylobacter jejuni subsp doylei 269.97 isolated from human blood.</title>
        <authorList>
            <person name="Fouts D.E."/>
            <person name="Mongodin E.F."/>
            <person name="Puiu D."/>
            <person name="Sebastian Y."/>
            <person name="Miller W.G."/>
            <person name="Mandrell R.E."/>
            <person name="Lastovica A.J."/>
            <person name="Nelson K.E."/>
        </authorList>
    </citation>
    <scope>NUCLEOTIDE SEQUENCE [LARGE SCALE GENOMIC DNA]</scope>
    <source>
        <strain>ATCC BAA-1458 / RM4099 / 269.97</strain>
    </source>
</reference>
<feature type="chain" id="PRO_1000166653" description="NADH-quinone oxidoreductase subunit B">
    <location>
        <begin position="1"/>
        <end position="167"/>
    </location>
</feature>
<feature type="binding site" evidence="1">
    <location>
        <position position="40"/>
    </location>
    <ligand>
        <name>[4Fe-4S] cluster</name>
        <dbReference type="ChEBI" id="CHEBI:49883"/>
    </ligand>
</feature>
<feature type="binding site" evidence="1">
    <location>
        <position position="41"/>
    </location>
    <ligand>
        <name>[4Fe-4S] cluster</name>
        <dbReference type="ChEBI" id="CHEBI:49883"/>
    </ligand>
</feature>
<feature type="binding site" evidence="1">
    <location>
        <position position="105"/>
    </location>
    <ligand>
        <name>[4Fe-4S] cluster</name>
        <dbReference type="ChEBI" id="CHEBI:49883"/>
    </ligand>
</feature>
<feature type="binding site" evidence="1">
    <location>
        <position position="134"/>
    </location>
    <ligand>
        <name>[4Fe-4S] cluster</name>
        <dbReference type="ChEBI" id="CHEBI:49883"/>
    </ligand>
</feature>
<evidence type="ECO:0000255" key="1">
    <source>
        <dbReference type="HAMAP-Rule" id="MF_01356"/>
    </source>
</evidence>
<keyword id="KW-0004">4Fe-4S</keyword>
<keyword id="KW-0997">Cell inner membrane</keyword>
<keyword id="KW-1003">Cell membrane</keyword>
<keyword id="KW-0408">Iron</keyword>
<keyword id="KW-0411">Iron-sulfur</keyword>
<keyword id="KW-0472">Membrane</keyword>
<keyword id="KW-0479">Metal-binding</keyword>
<keyword id="KW-0520">NAD</keyword>
<keyword id="KW-0874">Quinone</keyword>
<keyword id="KW-1278">Translocase</keyword>
<keyword id="KW-0813">Transport</keyword>
<keyword id="KW-0830">Ubiquinone</keyword>
<proteinExistence type="inferred from homology"/>
<accession>A7H5T0</accession>
<gene>
    <name evidence="1" type="primary">nuoB</name>
    <name type="ordered locus">JJD26997_1929</name>
</gene>
<sequence>MAEHQVNYASGLPVVLTSVDKLVQWGRSNSLWALSYGLACCAIEMMAAGGSRYDFDRFGTIFRASPRHSEVMIIAGTLCKKHAEFTRRLYDQMPDPKWVISMGSCANTGGMFNTYSTVQGVDRIIPVDIYVPGCAPRPESFQFALMILQKKIRKEKASRKIAPKRLV</sequence>